<keyword id="KW-0903">Direct protein sequencing</keyword>
<keyword id="KW-0249">Electron transport</keyword>
<keyword id="KW-0349">Heme</keyword>
<keyword id="KW-0408">Iron</keyword>
<keyword id="KW-0479">Metal-binding</keyword>
<keyword id="KW-0496">Mitochondrion</keyword>
<keyword id="KW-0679">Respiratory chain</keyword>
<keyword id="KW-0813">Transport</keyword>
<name>CYC_SARPE</name>
<reference key="1">
    <citation type="journal article" date="1986" name="J. Biochem.">
        <title>Developmental variation and amino acid sequences of cytochromes c of the fruit fly Drosophila melanogaster and the flesh fly Boettcherisca peregrina.</title>
        <authorList>
            <person name="Inoue S."/>
            <person name="Inoue H."/>
            <person name="Hiroyoshi T."/>
            <person name="Matsubara H."/>
            <person name="Yamanaka T."/>
        </authorList>
    </citation>
    <scope>PROTEIN SEQUENCE OF 2-108</scope>
</reference>
<comment type="function">
    <text>Electron carrier protein. The oxidized form of the cytochrome c heme group can accept an electron from the heme group of the cytochrome c1 subunit of cytochrome reductase. Cytochrome c then transfers this electron to the cytochrome oxidase complex, the final protein carrier in the mitochondrial electron-transport chain.</text>
</comment>
<comment type="subcellular location">
    <subcellularLocation>
        <location>Mitochondrion intermembrane space</location>
    </subcellularLocation>
    <text>Loosely associated with the inner membrane.</text>
</comment>
<comment type="PTM">
    <text>Binds 1 heme c group covalently per subunit.</text>
</comment>
<comment type="similarity">
    <text evidence="2">Belongs to the cytochrome c family.</text>
</comment>
<comment type="online information" name="Protein Spotlight">
    <link uri="https://www.proteinspotlight.org/back_issues/076"/>
    <text>Life shuttle - Issue 76 of November 2006</text>
</comment>
<dbReference type="PIR" id="B25506">
    <property type="entry name" value="B25506"/>
</dbReference>
<dbReference type="SMR" id="P12831"/>
<dbReference type="GO" id="GO:0005758">
    <property type="term" value="C:mitochondrial intermembrane space"/>
    <property type="evidence" value="ECO:0007669"/>
    <property type="project" value="UniProtKB-SubCell"/>
</dbReference>
<dbReference type="GO" id="GO:0009055">
    <property type="term" value="F:electron transfer activity"/>
    <property type="evidence" value="ECO:0007669"/>
    <property type="project" value="InterPro"/>
</dbReference>
<dbReference type="GO" id="GO:0020037">
    <property type="term" value="F:heme binding"/>
    <property type="evidence" value="ECO:0007669"/>
    <property type="project" value="InterPro"/>
</dbReference>
<dbReference type="GO" id="GO:0046872">
    <property type="term" value="F:metal ion binding"/>
    <property type="evidence" value="ECO:0007669"/>
    <property type="project" value="UniProtKB-KW"/>
</dbReference>
<dbReference type="FunFam" id="1.10.760.10:FF:000001">
    <property type="entry name" value="Cytochrome c iso-1"/>
    <property type="match status" value="1"/>
</dbReference>
<dbReference type="Gene3D" id="1.10.760.10">
    <property type="entry name" value="Cytochrome c-like domain"/>
    <property type="match status" value="1"/>
</dbReference>
<dbReference type="InterPro" id="IPR009056">
    <property type="entry name" value="Cyt_c-like_dom"/>
</dbReference>
<dbReference type="InterPro" id="IPR036909">
    <property type="entry name" value="Cyt_c-like_dom_sf"/>
</dbReference>
<dbReference type="InterPro" id="IPR002327">
    <property type="entry name" value="Cyt_c_1A/1B"/>
</dbReference>
<dbReference type="PANTHER" id="PTHR11961">
    <property type="entry name" value="CYTOCHROME C"/>
    <property type="match status" value="1"/>
</dbReference>
<dbReference type="Pfam" id="PF00034">
    <property type="entry name" value="Cytochrom_C"/>
    <property type="match status" value="1"/>
</dbReference>
<dbReference type="PRINTS" id="PR00604">
    <property type="entry name" value="CYTCHRMECIAB"/>
</dbReference>
<dbReference type="SUPFAM" id="SSF46626">
    <property type="entry name" value="Cytochrome c"/>
    <property type="match status" value="1"/>
</dbReference>
<dbReference type="PROSITE" id="PS51007">
    <property type="entry name" value="CYTC"/>
    <property type="match status" value="1"/>
</dbReference>
<sequence>MGVPAGDVEKGKKIFVQRCAQCHTVEAGGKHKVGPNLHGLFGRKTGQAPGFAYTDANKAKGITWNEDTLFEYLENPKKYIPGTKMIFAGLKKPNERGDLIAYLKSATK</sequence>
<proteinExistence type="evidence at protein level"/>
<feature type="initiator methionine" description="Removed" evidence="1">
    <location>
        <position position="1"/>
    </location>
</feature>
<feature type="chain" id="PRO_0000108266" description="Cytochrome c">
    <location>
        <begin position="2"/>
        <end position="108"/>
    </location>
</feature>
<feature type="binding site" description="covalent">
    <location>
        <position position="19"/>
    </location>
    <ligand>
        <name>heme c</name>
        <dbReference type="ChEBI" id="CHEBI:61717"/>
    </ligand>
</feature>
<feature type="binding site" description="covalent">
    <location>
        <position position="22"/>
    </location>
    <ligand>
        <name>heme c</name>
        <dbReference type="ChEBI" id="CHEBI:61717"/>
    </ligand>
</feature>
<feature type="binding site" description="axial binding residue">
    <location>
        <position position="23"/>
    </location>
    <ligand>
        <name>heme c</name>
        <dbReference type="ChEBI" id="CHEBI:61717"/>
    </ligand>
    <ligandPart>
        <name>Fe</name>
        <dbReference type="ChEBI" id="CHEBI:18248"/>
    </ligandPart>
</feature>
<feature type="binding site" description="axial binding residue">
    <location>
        <position position="85"/>
    </location>
    <ligand>
        <name>heme c</name>
        <dbReference type="ChEBI" id="CHEBI:61717"/>
    </ligand>
    <ligandPart>
        <name>Fe</name>
        <dbReference type="ChEBI" id="CHEBI:18248"/>
    </ligandPart>
</feature>
<accession>P12831</accession>
<organism>
    <name type="scientific">Sarcophaga peregrina</name>
    <name type="common">Flesh fly</name>
    <name type="synonym">Boettcherisca peregrina</name>
    <dbReference type="NCBI Taxonomy" id="7386"/>
    <lineage>
        <taxon>Eukaryota</taxon>
        <taxon>Metazoa</taxon>
        <taxon>Ecdysozoa</taxon>
        <taxon>Arthropoda</taxon>
        <taxon>Hexapoda</taxon>
        <taxon>Insecta</taxon>
        <taxon>Pterygota</taxon>
        <taxon>Neoptera</taxon>
        <taxon>Endopterygota</taxon>
        <taxon>Diptera</taxon>
        <taxon>Brachycera</taxon>
        <taxon>Muscomorpha</taxon>
        <taxon>Oestroidea</taxon>
        <taxon>Sarcophagidae</taxon>
        <taxon>Sarcophaga</taxon>
        <taxon>Boettcherisca</taxon>
    </lineage>
</organism>
<evidence type="ECO:0000269" key="1">
    <source>
    </source>
</evidence>
<evidence type="ECO:0000305" key="2"/>
<protein>
    <recommendedName>
        <fullName>Cytochrome c</fullName>
    </recommendedName>
</protein>